<dbReference type="EMBL" id="AY954182">
    <property type="protein sequence ID" value="AAY21329.1"/>
    <property type="molecule type" value="Genomic_DNA"/>
</dbReference>
<dbReference type="GO" id="GO:0009507">
    <property type="term" value="C:chloroplast"/>
    <property type="evidence" value="ECO:0007669"/>
    <property type="project" value="UniProtKB-SubCell"/>
</dbReference>
<dbReference type="GO" id="GO:0003723">
    <property type="term" value="F:RNA binding"/>
    <property type="evidence" value="ECO:0007669"/>
    <property type="project" value="UniProtKB-KW"/>
</dbReference>
<dbReference type="GO" id="GO:0006397">
    <property type="term" value="P:mRNA processing"/>
    <property type="evidence" value="ECO:0007669"/>
    <property type="project" value="UniProtKB-KW"/>
</dbReference>
<dbReference type="GO" id="GO:0008380">
    <property type="term" value="P:RNA splicing"/>
    <property type="evidence" value="ECO:0007669"/>
    <property type="project" value="UniProtKB-UniRule"/>
</dbReference>
<dbReference type="GO" id="GO:0008033">
    <property type="term" value="P:tRNA processing"/>
    <property type="evidence" value="ECO:0007669"/>
    <property type="project" value="UniProtKB-KW"/>
</dbReference>
<dbReference type="HAMAP" id="MF_01390">
    <property type="entry name" value="MatK"/>
    <property type="match status" value="1"/>
</dbReference>
<dbReference type="InterPro" id="IPR024937">
    <property type="entry name" value="Domain_X"/>
</dbReference>
<dbReference type="InterPro" id="IPR002866">
    <property type="entry name" value="Maturase_MatK"/>
</dbReference>
<dbReference type="InterPro" id="IPR024942">
    <property type="entry name" value="Maturase_MatK_N"/>
</dbReference>
<dbReference type="PANTHER" id="PTHR34811">
    <property type="entry name" value="MATURASE K"/>
    <property type="match status" value="1"/>
</dbReference>
<dbReference type="PANTHER" id="PTHR34811:SF1">
    <property type="entry name" value="MATURASE K"/>
    <property type="match status" value="1"/>
</dbReference>
<dbReference type="Pfam" id="PF01348">
    <property type="entry name" value="Intron_maturas2"/>
    <property type="match status" value="1"/>
</dbReference>
<dbReference type="Pfam" id="PF01824">
    <property type="entry name" value="MatK_N"/>
    <property type="match status" value="1"/>
</dbReference>
<reference key="1">
    <citation type="journal article" date="2005" name="Taxon">
        <title>Phylogenetic relationships and biogeography of Ranunculus and allied genera (Ranunculaceae) in the Mediterranean region and in the European alpine system.</title>
        <authorList>
            <person name="Paun O."/>
            <person name="Lehnebach C."/>
            <person name="Johansson J.T."/>
            <person name="Lockhart P."/>
            <person name="Hoerandl E."/>
        </authorList>
    </citation>
    <scope>NUCLEOTIDE SEQUENCE [GENOMIC DNA]</scope>
</reference>
<name>MATK_RANRE</name>
<accession>Q507T3</accession>
<keyword id="KW-0150">Chloroplast</keyword>
<keyword id="KW-0507">mRNA processing</keyword>
<keyword id="KW-0934">Plastid</keyword>
<keyword id="KW-0694">RNA-binding</keyword>
<keyword id="KW-0819">tRNA processing</keyword>
<feature type="chain" id="PRO_0000143672" description="Maturase K">
    <location>
        <begin position="1"/>
        <end position="507"/>
    </location>
</feature>
<geneLocation type="chloroplast"/>
<organism>
    <name type="scientific">Ranunculus repens</name>
    <name type="common">Creeping buttercup</name>
    <dbReference type="NCBI Taxonomy" id="137665"/>
    <lineage>
        <taxon>Eukaryota</taxon>
        <taxon>Viridiplantae</taxon>
        <taxon>Streptophyta</taxon>
        <taxon>Embryophyta</taxon>
        <taxon>Tracheophyta</taxon>
        <taxon>Spermatophyta</taxon>
        <taxon>Magnoliopsida</taxon>
        <taxon>Ranunculales</taxon>
        <taxon>Ranunculaceae</taxon>
        <taxon>Ranunculoideae</taxon>
        <taxon>Ranunculeae</taxon>
        <taxon>Ranunculus</taxon>
    </lineage>
</organism>
<sequence>MEELQRYLKMDRSRERDFLYPLLFQEYIYALAHDFGLTKSIPYESMQILSYDNKYSSLIVKRLIIRMYQQKHLIILDNDSKNKNFLGHNKNLYSQMISEGFAVIVEIPFALRLVSSYQGKEIEKSINLGSIHSTFPFLEDKFVHLNHVLNILIPYPIHFELIVQNLRCWIQDASFLHLLRFFLYEYHNWNSFTTQKMKQNSLFLKENRRFFLFLYNFHVYESESIFLFLRKKSYHLRSTSSIAFLDRTHFFGKIEHLKVVFRNDFHTMLWLFKDPFMHYFRYQGKSIMSSKGTPLLMKKWKYYLVNLWECHFYFWSQPNRIHINQLSNIFLNFLGYLSSVRPNPSVVRNQMLENAFIIDISINKLNTLVPIIPLIGSLAKAKFCNLSGQPISKPAWTDSLDSDIIDRFGRICRNVSHYYSGSSKKKTLYRIKYILRLSCARTLARKHKSSVRSFLKRLGSEFLEEFLIEEEQVLSFILPKISSSSQRLSKERIWYFDIIRINDLMDL</sequence>
<gene>
    <name evidence="1" type="primary">matK</name>
</gene>
<protein>
    <recommendedName>
        <fullName evidence="1">Maturase K</fullName>
    </recommendedName>
    <alternativeName>
        <fullName evidence="1">Intron maturase</fullName>
    </alternativeName>
</protein>
<proteinExistence type="inferred from homology"/>
<evidence type="ECO:0000255" key="1">
    <source>
        <dbReference type="HAMAP-Rule" id="MF_01390"/>
    </source>
</evidence>
<comment type="function">
    <text evidence="1">Usually encoded in the trnK tRNA gene intron. Probably assists in splicing its own and other chloroplast group II introns.</text>
</comment>
<comment type="subcellular location">
    <subcellularLocation>
        <location>Plastid</location>
        <location>Chloroplast</location>
    </subcellularLocation>
</comment>
<comment type="similarity">
    <text evidence="1">Belongs to the intron maturase 2 family. MatK subfamily.</text>
</comment>